<protein>
    <recommendedName>
        <fullName evidence="1">Large ribosomal subunit protein uL23</fullName>
    </recommendedName>
    <alternativeName>
        <fullName evidence="2">50S ribosomal protein L23</fullName>
    </alternativeName>
</protein>
<reference key="1">
    <citation type="journal article" date="2000" name="Nature">
        <title>The genome sequence of the food-borne pathogen Campylobacter jejuni reveals hypervariable sequences.</title>
        <authorList>
            <person name="Parkhill J."/>
            <person name="Wren B.W."/>
            <person name="Mungall K.L."/>
            <person name="Ketley J.M."/>
            <person name="Churcher C.M."/>
            <person name="Basham D."/>
            <person name="Chillingworth T."/>
            <person name="Davies R.M."/>
            <person name="Feltwell T."/>
            <person name="Holroyd S."/>
            <person name="Jagels K."/>
            <person name="Karlyshev A.V."/>
            <person name="Moule S."/>
            <person name="Pallen M.J."/>
            <person name="Penn C.W."/>
            <person name="Quail M.A."/>
            <person name="Rajandream M.A."/>
            <person name="Rutherford K.M."/>
            <person name="van Vliet A.H.M."/>
            <person name="Whitehead S."/>
            <person name="Barrell B.G."/>
        </authorList>
    </citation>
    <scope>NUCLEOTIDE SEQUENCE [LARGE SCALE GENOMIC DNA]</scope>
    <source>
        <strain>ATCC 700819 / NCTC 11168</strain>
    </source>
</reference>
<accession>Q0P7S6</accession>
<evidence type="ECO:0000255" key="1">
    <source>
        <dbReference type="HAMAP-Rule" id="MF_01369"/>
    </source>
</evidence>
<evidence type="ECO:0000305" key="2"/>
<sequence length="93" mass="10567">MADITDIKTILYTEKSLNLQEQGVVVIQTSPKMTKTGLKAVLKEYFGVTPKSINSLRMDGKIKRFRGRLGQRNNYKKFYVKLPEGVSLENTEA</sequence>
<keyword id="KW-1185">Reference proteome</keyword>
<keyword id="KW-0687">Ribonucleoprotein</keyword>
<keyword id="KW-0689">Ribosomal protein</keyword>
<keyword id="KW-0694">RNA-binding</keyword>
<keyword id="KW-0699">rRNA-binding</keyword>
<feature type="chain" id="PRO_1000068054" description="Large ribosomal subunit protein uL23">
    <location>
        <begin position="1"/>
        <end position="93"/>
    </location>
</feature>
<dbReference type="EMBL" id="AL111168">
    <property type="protein sequence ID" value="CAL35799.1"/>
    <property type="molecule type" value="Genomic_DNA"/>
</dbReference>
<dbReference type="PIR" id="E81268">
    <property type="entry name" value="E81268"/>
</dbReference>
<dbReference type="RefSeq" id="WP_002851441.1">
    <property type="nucleotide sequence ID" value="NZ_SZUC01000002.1"/>
</dbReference>
<dbReference type="RefSeq" id="YP_002345071.1">
    <property type="nucleotide sequence ID" value="NC_002163.1"/>
</dbReference>
<dbReference type="SMR" id="Q0P7S6"/>
<dbReference type="IntAct" id="Q0P7S6">
    <property type="interactions" value="3"/>
</dbReference>
<dbReference type="STRING" id="192222.Cj1705c"/>
<dbReference type="PaxDb" id="192222-Cj1705c"/>
<dbReference type="EnsemblBacteria" id="CAL35799">
    <property type="protein sequence ID" value="CAL35799"/>
    <property type="gene ID" value="Cj1705c"/>
</dbReference>
<dbReference type="GeneID" id="905979"/>
<dbReference type="KEGG" id="cje:Cj1705c"/>
<dbReference type="PATRIC" id="fig|192222.6.peg.1679"/>
<dbReference type="eggNOG" id="COG0089">
    <property type="taxonomic scope" value="Bacteria"/>
</dbReference>
<dbReference type="HOGENOM" id="CLU_037562_3_1_7"/>
<dbReference type="OrthoDB" id="5339807at2"/>
<dbReference type="Proteomes" id="UP000000799">
    <property type="component" value="Chromosome"/>
</dbReference>
<dbReference type="GO" id="GO:1990904">
    <property type="term" value="C:ribonucleoprotein complex"/>
    <property type="evidence" value="ECO:0007669"/>
    <property type="project" value="UniProtKB-KW"/>
</dbReference>
<dbReference type="GO" id="GO:0005840">
    <property type="term" value="C:ribosome"/>
    <property type="evidence" value="ECO:0007669"/>
    <property type="project" value="UniProtKB-KW"/>
</dbReference>
<dbReference type="GO" id="GO:0019843">
    <property type="term" value="F:rRNA binding"/>
    <property type="evidence" value="ECO:0007669"/>
    <property type="project" value="UniProtKB-UniRule"/>
</dbReference>
<dbReference type="GO" id="GO:0003735">
    <property type="term" value="F:structural constituent of ribosome"/>
    <property type="evidence" value="ECO:0007669"/>
    <property type="project" value="InterPro"/>
</dbReference>
<dbReference type="GO" id="GO:0006412">
    <property type="term" value="P:translation"/>
    <property type="evidence" value="ECO:0007669"/>
    <property type="project" value="UniProtKB-UniRule"/>
</dbReference>
<dbReference type="Gene3D" id="3.30.70.330">
    <property type="match status" value="1"/>
</dbReference>
<dbReference type="HAMAP" id="MF_01369_B">
    <property type="entry name" value="Ribosomal_uL23_B"/>
    <property type="match status" value="1"/>
</dbReference>
<dbReference type="InterPro" id="IPR012677">
    <property type="entry name" value="Nucleotide-bd_a/b_plait_sf"/>
</dbReference>
<dbReference type="InterPro" id="IPR013025">
    <property type="entry name" value="Ribosomal_uL23-like"/>
</dbReference>
<dbReference type="InterPro" id="IPR012678">
    <property type="entry name" value="Ribosomal_uL23/eL15/eS24_sf"/>
</dbReference>
<dbReference type="NCBIfam" id="NF004362">
    <property type="entry name" value="PRK05738.2-2"/>
    <property type="match status" value="1"/>
</dbReference>
<dbReference type="Pfam" id="PF00276">
    <property type="entry name" value="Ribosomal_L23"/>
    <property type="match status" value="1"/>
</dbReference>
<dbReference type="SUPFAM" id="SSF54189">
    <property type="entry name" value="Ribosomal proteins S24e, L23 and L15e"/>
    <property type="match status" value="1"/>
</dbReference>
<comment type="function">
    <text evidence="1">One of the early assembly proteins it binds 23S rRNA. One of the proteins that surrounds the polypeptide exit tunnel on the outside of the ribosome. Forms the main docking site for trigger factor binding to the ribosome.</text>
</comment>
<comment type="subunit">
    <text evidence="1">Part of the 50S ribosomal subunit. Contacts protein L29, and trigger factor when it is bound to the ribosome.</text>
</comment>
<comment type="similarity">
    <text evidence="1">Belongs to the universal ribosomal protein uL23 family.</text>
</comment>
<name>RL23_CAMJE</name>
<gene>
    <name evidence="1" type="primary">rplW</name>
    <name type="ordered locus">Cj1705c</name>
</gene>
<organism>
    <name type="scientific">Campylobacter jejuni subsp. jejuni serotype O:2 (strain ATCC 700819 / NCTC 11168)</name>
    <dbReference type="NCBI Taxonomy" id="192222"/>
    <lineage>
        <taxon>Bacteria</taxon>
        <taxon>Pseudomonadati</taxon>
        <taxon>Campylobacterota</taxon>
        <taxon>Epsilonproteobacteria</taxon>
        <taxon>Campylobacterales</taxon>
        <taxon>Campylobacteraceae</taxon>
        <taxon>Campylobacter</taxon>
    </lineage>
</organism>
<proteinExistence type="inferred from homology"/>